<keyword id="KW-0687">Ribonucleoprotein</keyword>
<keyword id="KW-0689">Ribosomal protein</keyword>
<keyword id="KW-0694">RNA-binding</keyword>
<keyword id="KW-0699">rRNA-binding</keyword>
<keyword id="KW-0820">tRNA-binding</keyword>
<name>RS13_CHLFF</name>
<dbReference type="EMBL" id="AP006861">
    <property type="protein sequence ID" value="BAE81666.1"/>
    <property type="molecule type" value="Genomic_DNA"/>
</dbReference>
<dbReference type="RefSeq" id="WP_011006085.1">
    <property type="nucleotide sequence ID" value="NC_007899.1"/>
</dbReference>
<dbReference type="SMR" id="Q252X2"/>
<dbReference type="STRING" id="264202.CF0894"/>
<dbReference type="KEGG" id="cfe:CF0894"/>
<dbReference type="eggNOG" id="COG0099">
    <property type="taxonomic scope" value="Bacteria"/>
</dbReference>
<dbReference type="HOGENOM" id="CLU_103849_1_2_0"/>
<dbReference type="OrthoDB" id="9803610at2"/>
<dbReference type="Proteomes" id="UP000001260">
    <property type="component" value="Chromosome"/>
</dbReference>
<dbReference type="GO" id="GO:0005829">
    <property type="term" value="C:cytosol"/>
    <property type="evidence" value="ECO:0007669"/>
    <property type="project" value="TreeGrafter"/>
</dbReference>
<dbReference type="GO" id="GO:0015935">
    <property type="term" value="C:small ribosomal subunit"/>
    <property type="evidence" value="ECO:0007669"/>
    <property type="project" value="TreeGrafter"/>
</dbReference>
<dbReference type="GO" id="GO:0019843">
    <property type="term" value="F:rRNA binding"/>
    <property type="evidence" value="ECO:0007669"/>
    <property type="project" value="UniProtKB-UniRule"/>
</dbReference>
<dbReference type="GO" id="GO:0003735">
    <property type="term" value="F:structural constituent of ribosome"/>
    <property type="evidence" value="ECO:0007669"/>
    <property type="project" value="InterPro"/>
</dbReference>
<dbReference type="GO" id="GO:0000049">
    <property type="term" value="F:tRNA binding"/>
    <property type="evidence" value="ECO:0007669"/>
    <property type="project" value="UniProtKB-UniRule"/>
</dbReference>
<dbReference type="GO" id="GO:0006412">
    <property type="term" value="P:translation"/>
    <property type="evidence" value="ECO:0007669"/>
    <property type="project" value="UniProtKB-UniRule"/>
</dbReference>
<dbReference type="FunFam" id="1.10.8.50:FF:000001">
    <property type="entry name" value="30S ribosomal protein S13"/>
    <property type="match status" value="1"/>
</dbReference>
<dbReference type="FunFam" id="4.10.910.10:FF:000001">
    <property type="entry name" value="30S ribosomal protein S13"/>
    <property type="match status" value="1"/>
</dbReference>
<dbReference type="Gene3D" id="1.10.8.50">
    <property type="match status" value="1"/>
</dbReference>
<dbReference type="Gene3D" id="4.10.910.10">
    <property type="entry name" value="30s ribosomal protein s13, domain 2"/>
    <property type="match status" value="1"/>
</dbReference>
<dbReference type="HAMAP" id="MF_01315">
    <property type="entry name" value="Ribosomal_uS13"/>
    <property type="match status" value="1"/>
</dbReference>
<dbReference type="InterPro" id="IPR027437">
    <property type="entry name" value="Rbsml_uS13_C"/>
</dbReference>
<dbReference type="InterPro" id="IPR001892">
    <property type="entry name" value="Ribosomal_uS13"/>
</dbReference>
<dbReference type="InterPro" id="IPR010979">
    <property type="entry name" value="Ribosomal_uS13-like_H2TH"/>
</dbReference>
<dbReference type="InterPro" id="IPR019980">
    <property type="entry name" value="Ribosomal_uS13_bac-type"/>
</dbReference>
<dbReference type="InterPro" id="IPR018269">
    <property type="entry name" value="Ribosomal_uS13_CS"/>
</dbReference>
<dbReference type="NCBIfam" id="TIGR03631">
    <property type="entry name" value="uS13_bact"/>
    <property type="match status" value="1"/>
</dbReference>
<dbReference type="PANTHER" id="PTHR10871">
    <property type="entry name" value="30S RIBOSOMAL PROTEIN S13/40S RIBOSOMAL PROTEIN S18"/>
    <property type="match status" value="1"/>
</dbReference>
<dbReference type="PANTHER" id="PTHR10871:SF1">
    <property type="entry name" value="SMALL RIBOSOMAL SUBUNIT PROTEIN US13M"/>
    <property type="match status" value="1"/>
</dbReference>
<dbReference type="Pfam" id="PF00416">
    <property type="entry name" value="Ribosomal_S13"/>
    <property type="match status" value="1"/>
</dbReference>
<dbReference type="PIRSF" id="PIRSF002134">
    <property type="entry name" value="Ribosomal_S13"/>
    <property type="match status" value="1"/>
</dbReference>
<dbReference type="SUPFAM" id="SSF46946">
    <property type="entry name" value="S13-like H2TH domain"/>
    <property type="match status" value="1"/>
</dbReference>
<dbReference type="PROSITE" id="PS00646">
    <property type="entry name" value="RIBOSOMAL_S13_1"/>
    <property type="match status" value="1"/>
</dbReference>
<dbReference type="PROSITE" id="PS50159">
    <property type="entry name" value="RIBOSOMAL_S13_2"/>
    <property type="match status" value="1"/>
</dbReference>
<gene>
    <name evidence="1" type="primary">rpsM</name>
    <name type="ordered locus">CF0894</name>
</gene>
<accession>Q252X2</accession>
<proteinExistence type="inferred from homology"/>
<organism>
    <name type="scientific">Chlamydia felis (strain Fe/C-56)</name>
    <name type="common">Chlamydophila felis</name>
    <dbReference type="NCBI Taxonomy" id="264202"/>
    <lineage>
        <taxon>Bacteria</taxon>
        <taxon>Pseudomonadati</taxon>
        <taxon>Chlamydiota</taxon>
        <taxon>Chlamydiia</taxon>
        <taxon>Chlamydiales</taxon>
        <taxon>Chlamydiaceae</taxon>
        <taxon>Chlamydia/Chlamydophila group</taxon>
        <taxon>Chlamydia</taxon>
    </lineage>
</organism>
<comment type="function">
    <text evidence="1">Located at the top of the head of the 30S subunit, it contacts several helices of the 16S rRNA. In the 70S ribosome it contacts the 23S rRNA (bridge B1a) and protein L5 of the 50S subunit (bridge B1b), connecting the 2 subunits; these bridges are implicated in subunit movement. Contacts the tRNAs in the A and P-sites.</text>
</comment>
<comment type="subunit">
    <text evidence="1">Part of the 30S ribosomal subunit. Forms a loose heterodimer with protein S19. Forms two bridges to the 50S subunit in the 70S ribosome.</text>
</comment>
<comment type="similarity">
    <text evidence="1">Belongs to the universal ribosomal protein uS13 family.</text>
</comment>
<evidence type="ECO:0000255" key="1">
    <source>
        <dbReference type="HAMAP-Rule" id="MF_01315"/>
    </source>
</evidence>
<evidence type="ECO:0000256" key="2">
    <source>
        <dbReference type="SAM" id="MobiDB-lite"/>
    </source>
</evidence>
<evidence type="ECO:0000305" key="3"/>
<feature type="chain" id="PRO_0000306584" description="Small ribosomal subunit protein uS13">
    <location>
        <begin position="1"/>
        <end position="122"/>
    </location>
</feature>
<feature type="region of interest" description="Disordered" evidence="2">
    <location>
        <begin position="93"/>
        <end position="122"/>
    </location>
</feature>
<feature type="compositionally biased region" description="Basic residues" evidence="2">
    <location>
        <begin position="101"/>
        <end position="122"/>
    </location>
</feature>
<protein>
    <recommendedName>
        <fullName evidence="1">Small ribosomal subunit protein uS13</fullName>
    </recommendedName>
    <alternativeName>
        <fullName evidence="3">30S ribosomal protein S13</fullName>
    </alternativeName>
</protein>
<sequence length="122" mass="13912">MPRIIGIDIPAKKKLKISLTYIYGIGPALSEEIIAKLQLNPEARAVELTEEEIGRLNSLLQSEYVVEGDLRRRVQSDIKRLISIHAYRGQRHRLSLPVRGQRTKTNSRTRKGKRKTVAGKKK</sequence>
<reference key="1">
    <citation type="journal article" date="2006" name="DNA Res.">
        <title>Genome sequence of the cat pathogen, Chlamydophila felis.</title>
        <authorList>
            <person name="Azuma Y."/>
            <person name="Hirakawa H."/>
            <person name="Yamashita A."/>
            <person name="Cai Y."/>
            <person name="Rahman M.A."/>
            <person name="Suzuki H."/>
            <person name="Mitaku S."/>
            <person name="Toh H."/>
            <person name="Goto S."/>
            <person name="Murakami T."/>
            <person name="Sugi K."/>
            <person name="Hayashi H."/>
            <person name="Fukushi H."/>
            <person name="Hattori M."/>
            <person name="Kuhara S."/>
            <person name="Shirai M."/>
        </authorList>
    </citation>
    <scope>NUCLEOTIDE SEQUENCE [LARGE SCALE GENOMIC DNA]</scope>
    <source>
        <strain>Fe/C-56</strain>
    </source>
</reference>